<comment type="miscellaneous">
    <text>This chain was isolated from an IgG2a hybridoma protein that binds digoxin.</text>
</comment>
<feature type="chain" id="PRO_0000059776" description="Ig kappa chain V-II region 26-10">
    <location>
        <begin position="1"/>
        <end position="113" status="greater than"/>
    </location>
</feature>
<feature type="region of interest" description="Framework-1">
    <location>
        <begin position="1"/>
        <end position="23"/>
    </location>
</feature>
<feature type="region of interest" description="Complementarity-determining-1">
    <location>
        <begin position="24"/>
        <end position="39"/>
    </location>
</feature>
<feature type="region of interest" description="Framework-2">
    <location>
        <begin position="40"/>
        <end position="54"/>
    </location>
</feature>
<feature type="region of interest" description="Complementarity-determining-2">
    <location>
        <begin position="55"/>
        <end position="61"/>
    </location>
</feature>
<feature type="region of interest" description="Framework-3">
    <location>
        <begin position="62"/>
        <end position="93"/>
    </location>
</feature>
<feature type="region of interest" description="Complementarity-determining-3">
    <location>
        <begin position="94"/>
        <end position="102"/>
    </location>
</feature>
<feature type="region of interest" description="Framework-4">
    <location>
        <begin position="103"/>
        <end position="112"/>
    </location>
</feature>
<feature type="disulfide bond" evidence="1">
    <location>
        <begin position="23"/>
        <end position="93"/>
    </location>
</feature>
<feature type="non-terminal residue">
    <location>
        <position position="113"/>
    </location>
</feature>
<feature type="strand" evidence="3">
    <location>
        <begin position="4"/>
        <end position="7"/>
    </location>
</feature>
<feature type="strand" evidence="3">
    <location>
        <begin position="9"/>
        <end position="13"/>
    </location>
</feature>
<feature type="strand" evidence="3">
    <location>
        <begin position="19"/>
        <end position="27"/>
    </location>
</feature>
<feature type="strand" evidence="2">
    <location>
        <begin position="31"/>
        <end position="34"/>
    </location>
</feature>
<feature type="strand" evidence="3">
    <location>
        <begin position="38"/>
        <end position="43"/>
    </location>
</feature>
<feature type="strand" evidence="3">
    <location>
        <begin position="50"/>
        <end position="54"/>
    </location>
</feature>
<feature type="turn" evidence="3">
    <location>
        <begin position="55"/>
        <end position="57"/>
    </location>
</feature>
<feature type="strand" evidence="3">
    <location>
        <begin position="67"/>
        <end position="72"/>
    </location>
</feature>
<feature type="strand" evidence="3">
    <location>
        <begin position="75"/>
        <end position="80"/>
    </location>
</feature>
<feature type="helix" evidence="3">
    <location>
        <begin position="85"/>
        <end position="87"/>
    </location>
</feature>
<feature type="strand" evidence="3">
    <location>
        <begin position="89"/>
        <end position="95"/>
    </location>
</feature>
<feature type="strand" evidence="3">
    <location>
        <begin position="97"/>
        <end position="100"/>
    </location>
</feature>
<feature type="strand" evidence="3">
    <location>
        <begin position="107"/>
        <end position="111"/>
    </location>
</feature>
<protein>
    <recommendedName>
        <fullName>Ig kappa chain V-II region 26-10</fullName>
    </recommendedName>
</protein>
<reference key="1">
    <citation type="journal article" date="1983" name="Biochemistry">
        <title>Amino acid sequence of the light chain variable region from a mouse anti-digoxin hybridoma antibody.</title>
        <authorList>
            <person name="Novotny J."/>
            <person name="Margolies M.N."/>
        </authorList>
    </citation>
    <scope>PROTEIN SEQUENCE</scope>
    <source>
        <strain>A/J</strain>
    </source>
</reference>
<accession>P01631</accession>
<keyword id="KW-0002">3D-structure</keyword>
<keyword id="KW-1064">Adaptive immunity</keyword>
<keyword id="KW-0903">Direct protein sequencing</keyword>
<keyword id="KW-1015">Disulfide bond</keyword>
<keyword id="KW-0374">Hybridoma</keyword>
<keyword id="KW-0391">Immunity</keyword>
<keyword id="KW-1280">Immunoglobulin</keyword>
<keyword id="KW-0502">Monoclonal antibody</keyword>
<keyword id="KW-1185">Reference proteome</keyword>
<sequence>DVVMTQTPLSLPVSLGDQASISCRSSQSLVHSNGNTYLNWYLQKAGQSPKLLIYKVSNRFSGVPDRFSGSGSGTDFTLKISRVEAEDLGIYFCSQTTHVPPTFGGGTKLEIKR</sequence>
<proteinExistence type="evidence at protein level"/>
<organism>
    <name type="scientific">Mus musculus</name>
    <name type="common">Mouse</name>
    <dbReference type="NCBI Taxonomy" id="10090"/>
    <lineage>
        <taxon>Eukaryota</taxon>
        <taxon>Metazoa</taxon>
        <taxon>Chordata</taxon>
        <taxon>Craniata</taxon>
        <taxon>Vertebrata</taxon>
        <taxon>Euteleostomi</taxon>
        <taxon>Mammalia</taxon>
        <taxon>Eutheria</taxon>
        <taxon>Euarchontoglires</taxon>
        <taxon>Glires</taxon>
        <taxon>Rodentia</taxon>
        <taxon>Myomorpha</taxon>
        <taxon>Muroidea</taxon>
        <taxon>Muridae</taxon>
        <taxon>Murinae</taxon>
        <taxon>Mus</taxon>
        <taxon>Mus</taxon>
    </lineage>
</organism>
<evidence type="ECO:0000255" key="1">
    <source>
        <dbReference type="PROSITE-ProRule" id="PRU00114"/>
    </source>
</evidence>
<evidence type="ECO:0007829" key="2">
    <source>
        <dbReference type="PDB" id="1BFV"/>
    </source>
</evidence>
<evidence type="ECO:0007829" key="3">
    <source>
        <dbReference type="PDB" id="1DLF"/>
    </source>
</evidence>
<dbReference type="PIR" id="A01914">
    <property type="entry name" value="KVMS26"/>
</dbReference>
<dbReference type="PIR" id="A32248">
    <property type="entry name" value="A32248"/>
</dbReference>
<dbReference type="PIR" id="B32248">
    <property type="entry name" value="B32248"/>
</dbReference>
<dbReference type="PIR" id="C32248">
    <property type="entry name" value="C32248"/>
</dbReference>
<dbReference type="PIR" id="F32530">
    <property type="entry name" value="F32530"/>
</dbReference>
<dbReference type="PIR" id="H31485">
    <property type="entry name" value="H31485"/>
</dbReference>
<dbReference type="PIR" id="PH1030">
    <property type="entry name" value="PH1030"/>
</dbReference>
<dbReference type="PIR" id="PH1031">
    <property type="entry name" value="PH1031"/>
</dbReference>
<dbReference type="PIR" id="S53750">
    <property type="entry name" value="S53750"/>
</dbReference>
<dbReference type="PDB" id="1BFV">
    <property type="method" value="X-ray"/>
    <property type="resolution" value="2.10 A"/>
    <property type="chains" value="L=5-113"/>
</dbReference>
<dbReference type="PDB" id="1CFV">
    <property type="method" value="X-ray"/>
    <property type="resolution" value="2.10 A"/>
    <property type="chains" value="L=5-113"/>
</dbReference>
<dbReference type="PDB" id="1DLF">
    <property type="method" value="X-ray"/>
    <property type="resolution" value="1.45 A"/>
    <property type="chains" value="L=1-113"/>
</dbReference>
<dbReference type="PDB" id="1MAJ">
    <property type="method" value="NMR"/>
    <property type="chains" value="A=1-113"/>
</dbReference>
<dbReference type="PDB" id="1MAK">
    <property type="method" value="NMR"/>
    <property type="chains" value="A=1-113"/>
</dbReference>
<dbReference type="PDB" id="1N4X">
    <property type="method" value="X-ray"/>
    <property type="resolution" value="1.70 A"/>
    <property type="chains" value="L/M=4-110"/>
</dbReference>
<dbReference type="PDB" id="1SVZ">
    <property type="method" value="X-ray"/>
    <property type="resolution" value="1.89 A"/>
    <property type="chains" value="A/B=1-112"/>
</dbReference>
<dbReference type="PDB" id="1WZ1">
    <property type="method" value="X-ray"/>
    <property type="resolution" value="1.85 A"/>
    <property type="chains" value="L=1-113"/>
</dbReference>
<dbReference type="PDB" id="2BFV">
    <property type="method" value="X-ray"/>
    <property type="resolution" value="2.50 A"/>
    <property type="chains" value="L=5-113"/>
</dbReference>
<dbReference type="PDB" id="2DLF">
    <property type="method" value="X-ray"/>
    <property type="resolution" value="1.55 A"/>
    <property type="chains" value="L=1-113"/>
</dbReference>
<dbReference type="PDB" id="2HKF">
    <property type="method" value="X-ray"/>
    <property type="resolution" value="2.01 A"/>
    <property type="chains" value="L=1-113"/>
</dbReference>
<dbReference type="PDB" id="2HKH">
    <property type="method" value="X-ray"/>
    <property type="resolution" value="2.10 A"/>
    <property type="chains" value="L=1-113"/>
</dbReference>
<dbReference type="PDB" id="2IPT">
    <property type="method" value="X-ray"/>
    <property type="resolution" value="2.00 A"/>
    <property type="chains" value="L=1-113"/>
</dbReference>
<dbReference type="PDB" id="2IQA">
    <property type="method" value="X-ray"/>
    <property type="resolution" value="2.00 A"/>
    <property type="chains" value="A/L=1-113"/>
</dbReference>
<dbReference type="PDB" id="2O5X">
    <property type="method" value="X-ray"/>
    <property type="resolution" value="2.05 A"/>
    <property type="chains" value="L=1-113"/>
</dbReference>
<dbReference type="PDB" id="2O5Y">
    <property type="method" value="X-ray"/>
    <property type="resolution" value="2.85 A"/>
    <property type="chains" value="L=1-113"/>
</dbReference>
<dbReference type="PDB" id="2O5Z">
    <property type="method" value="X-ray"/>
    <property type="resolution" value="2.40 A"/>
    <property type="chains" value="L=1-113"/>
</dbReference>
<dbReference type="PDB" id="2R0W">
    <property type="method" value="X-ray"/>
    <property type="resolution" value="2.50 A"/>
    <property type="chains" value="L=1-113"/>
</dbReference>
<dbReference type="PDB" id="2VQ1">
    <property type="method" value="X-ray"/>
    <property type="resolution" value="2.50 A"/>
    <property type="chains" value="A/E=1-113"/>
</dbReference>
<dbReference type="PDBsum" id="1BFV"/>
<dbReference type="PDBsum" id="1CFV"/>
<dbReference type="PDBsum" id="1DLF"/>
<dbReference type="PDBsum" id="1MAJ"/>
<dbReference type="PDBsum" id="1MAK"/>
<dbReference type="PDBsum" id="1N4X"/>
<dbReference type="PDBsum" id="1SVZ"/>
<dbReference type="PDBsum" id="1WZ1"/>
<dbReference type="PDBsum" id="2BFV"/>
<dbReference type="PDBsum" id="2DLF"/>
<dbReference type="PDBsum" id="2HKF"/>
<dbReference type="PDBsum" id="2HKH"/>
<dbReference type="PDBsum" id="2IPT"/>
<dbReference type="PDBsum" id="2IQA"/>
<dbReference type="PDBsum" id="2O5X"/>
<dbReference type="PDBsum" id="2O5Y"/>
<dbReference type="PDBsum" id="2O5Z"/>
<dbReference type="PDBsum" id="2R0W"/>
<dbReference type="PDBsum" id="2VQ1"/>
<dbReference type="SMR" id="P01631"/>
<dbReference type="FunCoup" id="P01631">
    <property type="interactions" value="790"/>
</dbReference>
<dbReference type="IntAct" id="P01631">
    <property type="interactions" value="2"/>
</dbReference>
<dbReference type="MINT" id="P01631"/>
<dbReference type="GlyGen" id="P01631">
    <property type="glycosylation" value="1 site, 1 O-linked glycan (1 site)"/>
</dbReference>
<dbReference type="CPTAC" id="non-CPTAC-3718"/>
<dbReference type="jPOST" id="P01631"/>
<dbReference type="PeptideAtlas" id="P01631"/>
<dbReference type="InParanoid" id="P01631"/>
<dbReference type="EvolutionaryTrace" id="P01631"/>
<dbReference type="Proteomes" id="UP000000589">
    <property type="component" value="Unplaced"/>
</dbReference>
<dbReference type="RNAct" id="P01631">
    <property type="molecule type" value="protein"/>
</dbReference>
<dbReference type="GO" id="GO:0019814">
    <property type="term" value="C:immunoglobulin complex"/>
    <property type="evidence" value="ECO:0000318"/>
    <property type="project" value="GO_Central"/>
</dbReference>
<dbReference type="GO" id="GO:0003823">
    <property type="term" value="F:antigen binding"/>
    <property type="evidence" value="ECO:0007669"/>
    <property type="project" value="UniProtKB-KW"/>
</dbReference>
<dbReference type="GO" id="GO:0002250">
    <property type="term" value="P:adaptive immune response"/>
    <property type="evidence" value="ECO:0007669"/>
    <property type="project" value="UniProtKB-KW"/>
</dbReference>
<dbReference type="GO" id="GO:0006955">
    <property type="term" value="P:immune response"/>
    <property type="evidence" value="ECO:0000318"/>
    <property type="project" value="GO_Central"/>
</dbReference>
<dbReference type="CDD" id="cd04980">
    <property type="entry name" value="IgV_L_kappa"/>
    <property type="match status" value="1"/>
</dbReference>
<dbReference type="FunFam" id="2.60.40.10:FF:000365">
    <property type="entry name" value="If kappa light chain"/>
    <property type="match status" value="1"/>
</dbReference>
<dbReference type="Gene3D" id="2.60.40.10">
    <property type="entry name" value="Immunoglobulins"/>
    <property type="match status" value="1"/>
</dbReference>
<dbReference type="InterPro" id="IPR007110">
    <property type="entry name" value="Ig-like_dom"/>
</dbReference>
<dbReference type="InterPro" id="IPR036179">
    <property type="entry name" value="Ig-like_dom_sf"/>
</dbReference>
<dbReference type="InterPro" id="IPR013783">
    <property type="entry name" value="Ig-like_fold"/>
</dbReference>
<dbReference type="InterPro" id="IPR003599">
    <property type="entry name" value="Ig_sub"/>
</dbReference>
<dbReference type="InterPro" id="IPR013106">
    <property type="entry name" value="Ig_V-set"/>
</dbReference>
<dbReference type="InterPro" id="IPR050150">
    <property type="entry name" value="IgV_Light_Chain"/>
</dbReference>
<dbReference type="PANTHER" id="PTHR23267">
    <property type="entry name" value="IMMUNOGLOBULIN LIGHT CHAIN"/>
    <property type="match status" value="1"/>
</dbReference>
<dbReference type="Pfam" id="PF07686">
    <property type="entry name" value="V-set"/>
    <property type="match status" value="1"/>
</dbReference>
<dbReference type="SMART" id="SM00409">
    <property type="entry name" value="IG"/>
    <property type="match status" value="1"/>
</dbReference>
<dbReference type="SMART" id="SM00406">
    <property type="entry name" value="IGv"/>
    <property type="match status" value="1"/>
</dbReference>
<dbReference type="SUPFAM" id="SSF48726">
    <property type="entry name" value="Immunoglobulin"/>
    <property type="match status" value="1"/>
</dbReference>
<dbReference type="PROSITE" id="PS50835">
    <property type="entry name" value="IG_LIKE"/>
    <property type="match status" value="1"/>
</dbReference>
<name>KV2A7_MOUSE</name>